<comment type="function">
    <text evidence="1">Component of the cytochrome c oxidase, the last enzyme in the mitochondrial electron transport chain which drives oxidative phosphorylation. The respiratory chain contains 3 multisubunit complexes succinate dehydrogenase (complex II, CII), ubiquinol-cytochrome c oxidoreductase (cytochrome b-c1 complex, complex III, CIII) and cytochrome c oxidase (complex IV, CIV), that cooperate to transfer electrons derived from NADH and succinate to molecular oxygen, creating an electrochemical gradient over the inner membrane that drives transmembrane transport and the ATP synthase. Cytochrome c oxidase is the component of the respiratory chain that catalyzes the reduction of oxygen to water. Electrons originating from reduced cytochrome c in the intermembrane space (IMS) are transferred via the dinuclear copper A center (CU(A)) of subunit 2 and heme A of subunit 1 to the active site in subunit 1, a binuclear center (BNC) formed by heme A3 and copper B (CU(B)). The BNC reduces molecular oxygen to 2 water molecules using 4 electrons from cytochrome c in the IMS and 4 protons from the mitochondrial matrix.</text>
</comment>
<comment type="catalytic activity">
    <reaction evidence="1">
        <text>4 Fe(II)-[cytochrome c] + O2 + 8 H(+)(in) = 4 Fe(III)-[cytochrome c] + 2 H2O + 4 H(+)(out)</text>
        <dbReference type="Rhea" id="RHEA:11436"/>
        <dbReference type="Rhea" id="RHEA-COMP:10350"/>
        <dbReference type="Rhea" id="RHEA-COMP:14399"/>
        <dbReference type="ChEBI" id="CHEBI:15377"/>
        <dbReference type="ChEBI" id="CHEBI:15378"/>
        <dbReference type="ChEBI" id="CHEBI:15379"/>
        <dbReference type="ChEBI" id="CHEBI:29033"/>
        <dbReference type="ChEBI" id="CHEBI:29034"/>
        <dbReference type="EC" id="7.1.1.9"/>
    </reaction>
    <physiologicalReaction direction="left-to-right" evidence="1">
        <dbReference type="Rhea" id="RHEA:11437"/>
    </physiologicalReaction>
</comment>
<comment type="cofactor">
    <cofactor evidence="1">
        <name>Cu cation</name>
        <dbReference type="ChEBI" id="CHEBI:23378"/>
    </cofactor>
    <text evidence="1">Binds a dinuclear copper A center per subunit.</text>
</comment>
<comment type="subunit">
    <text evidence="1">Component of the cytochrome c oxidase (complex IV, CIV), a multisubunit enzyme composed of a catalytic core of 3 subunits and several supernumerary subunits. The complex exists as a monomer or a dimer and forms supercomplexes (SCs) in the inner mitochondrial membrane with ubiquinol-cytochrome c oxidoreductase (cytochrome b-c1 complex, complex III, CIII).</text>
</comment>
<comment type="subcellular location">
    <subcellularLocation>
        <location evidence="1">Mitochondrion inner membrane</location>
        <topology evidence="1">Multi-pass membrane protein</topology>
    </subcellularLocation>
</comment>
<comment type="similarity">
    <text evidence="3">Belongs to the cytochrome c oxidase subunit 2 family.</text>
</comment>
<accession>P25002</accession>
<feature type="chain" id="PRO_0000183663" description="Cytochrome c oxidase subunit 2">
    <location>
        <begin position="1"/>
        <end position="229"/>
    </location>
</feature>
<feature type="topological domain" description="Mitochondrial intermembrane" evidence="2">
    <location>
        <begin position="1"/>
        <end position="26"/>
    </location>
</feature>
<feature type="transmembrane region" description="Helical" evidence="2">
    <location>
        <begin position="27"/>
        <end position="48"/>
    </location>
</feature>
<feature type="topological domain" description="Mitochondrial matrix" evidence="2">
    <location>
        <begin position="49"/>
        <end position="62"/>
    </location>
</feature>
<feature type="transmembrane region" description="Helical" evidence="2">
    <location>
        <begin position="63"/>
        <end position="82"/>
    </location>
</feature>
<feature type="topological domain" description="Mitochondrial intermembrane" evidence="2">
    <location>
        <begin position="83"/>
        <end position="229"/>
    </location>
</feature>
<feature type="binding site" evidence="1">
    <location>
        <position position="161"/>
    </location>
    <ligand>
        <name>Cu cation</name>
        <dbReference type="ChEBI" id="CHEBI:23378"/>
        <label>A1</label>
    </ligand>
</feature>
<feature type="binding site" evidence="1">
    <location>
        <position position="196"/>
    </location>
    <ligand>
        <name>Cu cation</name>
        <dbReference type="ChEBI" id="CHEBI:23378"/>
        <label>A1</label>
    </ligand>
</feature>
<feature type="binding site" evidence="1">
    <location>
        <position position="196"/>
    </location>
    <ligand>
        <name>Cu cation</name>
        <dbReference type="ChEBI" id="CHEBI:23378"/>
        <label>A2</label>
    </ligand>
</feature>
<feature type="binding site" evidence="1">
    <location>
        <position position="198"/>
    </location>
    <ligand>
        <name>Cu cation</name>
        <dbReference type="ChEBI" id="CHEBI:23378"/>
        <label>A2</label>
    </ligand>
</feature>
<feature type="binding site" evidence="1">
    <location>
        <position position="198"/>
    </location>
    <ligand>
        <name>Mg(2+)</name>
        <dbReference type="ChEBI" id="CHEBI:18420"/>
        <note>ligand shared with subunit 1</note>
    </ligand>
</feature>
<feature type="binding site" evidence="1">
    <location>
        <position position="200"/>
    </location>
    <ligand>
        <name>Cu cation</name>
        <dbReference type="ChEBI" id="CHEBI:23378"/>
        <label>A1</label>
    </ligand>
</feature>
<feature type="binding site" evidence="1">
    <location>
        <position position="200"/>
    </location>
    <ligand>
        <name>Cu cation</name>
        <dbReference type="ChEBI" id="CHEBI:23378"/>
        <label>A2</label>
    </ligand>
</feature>
<feature type="binding site" evidence="1">
    <location>
        <position position="204"/>
    </location>
    <ligand>
        <name>Cu cation</name>
        <dbReference type="ChEBI" id="CHEBI:23378"/>
        <label>A2</label>
    </ligand>
</feature>
<feature type="binding site" evidence="1">
    <location>
        <position position="207"/>
    </location>
    <ligand>
        <name>Cu cation</name>
        <dbReference type="ChEBI" id="CHEBI:23378"/>
        <label>A1</label>
    </ligand>
</feature>
<protein>
    <recommendedName>
        <fullName>Cytochrome c oxidase subunit 2</fullName>
        <ecNumber>7.1.1.9</ecNumber>
    </recommendedName>
    <alternativeName>
        <fullName>Cytochrome c oxidase polypeptide II</fullName>
    </alternativeName>
</protein>
<geneLocation type="mitochondrion"/>
<name>COX2_PISOC</name>
<sequence>MANWTQLGLQDASSPLMEELIYFHDYTLIILTLITILVFYGLASLIVSSNTNRFFLEGQSLETIWTVIPAVILIFIALPSLQLLYLIDEVNNPFLTIKAIGHQWYWSYEYADYRDLEFDSYMIPTNDLTLGNPRLLEVDNRLTLPSQTPIRVLVTSSDVLHSWTVPSLGIKMDAVPGRLNQVNFFISRCGLFYGQCSEICGANHSFMPIVIESVNFSSFENWVSNFLNE</sequence>
<reference key="1">
    <citation type="journal article" date="1990" name="J. Mol. Evol.">
        <title>Nucleotide sequence of nine protein-coding genes and 22 tRNAs in the mitochondrial DNA of the sea star Pisaster ochraceus.</title>
        <authorList>
            <person name="Smith M.J."/>
            <person name="Banfield D.K."/>
            <person name="Doteval K."/>
            <person name="Gorski S."/>
            <person name="Kowbel D.J."/>
        </authorList>
    </citation>
    <scope>NUCLEOTIDE SEQUENCE [GENOMIC DNA]</scope>
</reference>
<gene>
    <name type="primary">COII</name>
</gene>
<organism>
    <name type="scientific">Pisaster ochraceus</name>
    <name type="common">Ochre sea star</name>
    <name type="synonym">Asterias ochracea</name>
    <dbReference type="NCBI Taxonomy" id="7612"/>
    <lineage>
        <taxon>Eukaryota</taxon>
        <taxon>Metazoa</taxon>
        <taxon>Echinodermata</taxon>
        <taxon>Eleutherozoa</taxon>
        <taxon>Asterozoa</taxon>
        <taxon>Asteroidea</taxon>
        <taxon>Forcipulatacea</taxon>
        <taxon>Forcipulatida</taxon>
        <taxon>Asteriidae</taxon>
        <taxon>Pisaster</taxon>
    </lineage>
</organism>
<evidence type="ECO:0000250" key="1">
    <source>
        <dbReference type="UniProtKB" id="P00410"/>
    </source>
</evidence>
<evidence type="ECO:0000255" key="2"/>
<evidence type="ECO:0000305" key="3"/>
<keyword id="KW-0186">Copper</keyword>
<keyword id="KW-0249">Electron transport</keyword>
<keyword id="KW-0460">Magnesium</keyword>
<keyword id="KW-0472">Membrane</keyword>
<keyword id="KW-0479">Metal-binding</keyword>
<keyword id="KW-0496">Mitochondrion</keyword>
<keyword id="KW-0999">Mitochondrion inner membrane</keyword>
<keyword id="KW-0679">Respiratory chain</keyword>
<keyword id="KW-1278">Translocase</keyword>
<keyword id="KW-0812">Transmembrane</keyword>
<keyword id="KW-1133">Transmembrane helix</keyword>
<keyword id="KW-0813">Transport</keyword>
<proteinExistence type="inferred from homology"/>
<dbReference type="EC" id="7.1.1.9"/>
<dbReference type="EMBL" id="X55514">
    <property type="protein sequence ID" value="CAA39126.1"/>
    <property type="molecule type" value="Genomic_DNA"/>
</dbReference>
<dbReference type="PIR" id="S14207">
    <property type="entry name" value="S14207"/>
</dbReference>
<dbReference type="SMR" id="P25002"/>
<dbReference type="GO" id="GO:0005743">
    <property type="term" value="C:mitochondrial inner membrane"/>
    <property type="evidence" value="ECO:0007669"/>
    <property type="project" value="UniProtKB-SubCell"/>
</dbReference>
<dbReference type="GO" id="GO:0005507">
    <property type="term" value="F:copper ion binding"/>
    <property type="evidence" value="ECO:0007669"/>
    <property type="project" value="InterPro"/>
</dbReference>
<dbReference type="GO" id="GO:0004129">
    <property type="term" value="F:cytochrome-c oxidase activity"/>
    <property type="evidence" value="ECO:0007669"/>
    <property type="project" value="UniProtKB-EC"/>
</dbReference>
<dbReference type="GO" id="GO:0042773">
    <property type="term" value="P:ATP synthesis coupled electron transport"/>
    <property type="evidence" value="ECO:0007669"/>
    <property type="project" value="TreeGrafter"/>
</dbReference>
<dbReference type="CDD" id="cd13912">
    <property type="entry name" value="CcO_II_C"/>
    <property type="match status" value="1"/>
</dbReference>
<dbReference type="FunFam" id="1.10.287.90:FF:000001">
    <property type="entry name" value="Cytochrome c oxidase subunit 2"/>
    <property type="match status" value="1"/>
</dbReference>
<dbReference type="FunFam" id="2.60.40.420:FF:000001">
    <property type="entry name" value="Cytochrome c oxidase subunit 2"/>
    <property type="match status" value="1"/>
</dbReference>
<dbReference type="Gene3D" id="1.10.287.90">
    <property type="match status" value="1"/>
</dbReference>
<dbReference type="Gene3D" id="2.60.40.420">
    <property type="entry name" value="Cupredoxins - blue copper proteins"/>
    <property type="match status" value="1"/>
</dbReference>
<dbReference type="InterPro" id="IPR045187">
    <property type="entry name" value="CcO_II"/>
</dbReference>
<dbReference type="InterPro" id="IPR002429">
    <property type="entry name" value="CcO_II-like_C"/>
</dbReference>
<dbReference type="InterPro" id="IPR034210">
    <property type="entry name" value="CcO_II_C"/>
</dbReference>
<dbReference type="InterPro" id="IPR001505">
    <property type="entry name" value="Copper_CuA"/>
</dbReference>
<dbReference type="InterPro" id="IPR008972">
    <property type="entry name" value="Cupredoxin"/>
</dbReference>
<dbReference type="InterPro" id="IPR014222">
    <property type="entry name" value="Cyt_c_oxidase_su2"/>
</dbReference>
<dbReference type="InterPro" id="IPR011759">
    <property type="entry name" value="Cyt_c_oxidase_su2_TM_dom"/>
</dbReference>
<dbReference type="InterPro" id="IPR036257">
    <property type="entry name" value="Cyt_c_oxidase_su2_TM_sf"/>
</dbReference>
<dbReference type="NCBIfam" id="TIGR02866">
    <property type="entry name" value="CoxB"/>
    <property type="match status" value="1"/>
</dbReference>
<dbReference type="PANTHER" id="PTHR22888:SF9">
    <property type="entry name" value="CYTOCHROME C OXIDASE SUBUNIT 2"/>
    <property type="match status" value="1"/>
</dbReference>
<dbReference type="PANTHER" id="PTHR22888">
    <property type="entry name" value="CYTOCHROME C OXIDASE, SUBUNIT II"/>
    <property type="match status" value="1"/>
</dbReference>
<dbReference type="Pfam" id="PF00116">
    <property type="entry name" value="COX2"/>
    <property type="match status" value="1"/>
</dbReference>
<dbReference type="Pfam" id="PF02790">
    <property type="entry name" value="COX2_TM"/>
    <property type="match status" value="1"/>
</dbReference>
<dbReference type="PRINTS" id="PR01166">
    <property type="entry name" value="CYCOXIDASEII"/>
</dbReference>
<dbReference type="SUPFAM" id="SSF49503">
    <property type="entry name" value="Cupredoxins"/>
    <property type="match status" value="1"/>
</dbReference>
<dbReference type="SUPFAM" id="SSF81464">
    <property type="entry name" value="Cytochrome c oxidase subunit II-like, transmembrane region"/>
    <property type="match status" value="1"/>
</dbReference>
<dbReference type="PROSITE" id="PS00078">
    <property type="entry name" value="COX2"/>
    <property type="match status" value="1"/>
</dbReference>
<dbReference type="PROSITE" id="PS50857">
    <property type="entry name" value="COX2_CUA"/>
    <property type="match status" value="1"/>
</dbReference>
<dbReference type="PROSITE" id="PS50999">
    <property type="entry name" value="COX2_TM"/>
    <property type="match status" value="1"/>
</dbReference>